<comment type="function">
    <text evidence="3">Omega-conotoxins act at presynaptic membranes, they bind and block voltage-gated calcium channels (Cav). This peptide reversibly and selectively inhibits Cav2.2/CACNA1B (IC(50)=11.5 nM) voltage-gated calcium channels. Channel time recovery after toxin exposure is short (about 50 seconds). In vivo, it effectively and dose-dependently reduces nociceptive behavior in the formalin test and in neuropathic pain models, and reduces mechanical and thermal allodynia in the tail nerve injury rat model. It also shows significant analgesic effects on writhing in mouse neurotransmitter- and cytokine-induced pain models, though it has no effect on acute thermal pain and interferon-gamma-induced pain. It also depresses blood pressure immediately after administration, but pressure recovers relatively quickly and completely.</text>
</comment>
<comment type="subcellular location">
    <subcellularLocation>
        <location evidence="6">Secreted</location>
    </subcellularLocation>
</comment>
<comment type="tissue specificity">
    <text evidence="6">Expressed by the venom duct.</text>
</comment>
<comment type="domain">
    <text evidence="2">The presence of a 'disulfide through disulfide knot' structurally defines this protein as a knottin.</text>
</comment>
<comment type="domain">
    <text evidence="5">The cysteine framework is VI/VII (C-C-CC-C-C).</text>
</comment>
<comment type="miscellaneous">
    <text evidence="3">Negative results: has no significant effect against all Cav subtypes tested, except for Cav2.2, as well as against TTX-sensitive sodium channels of mouse DRG neuron.</text>
</comment>
<comment type="similarity">
    <text evidence="5">Belongs to the conotoxin O1 superfamily.</text>
</comment>
<protein>
    <recommendedName>
        <fullName evidence="4">Conotoxin FVIA</fullName>
    </recommendedName>
</protein>
<reference key="1">
    <citation type="journal article" date="2010" name="Mol. Pain">
        <title>Analgesic effect of highly reversible omega-conotoxin FVIA on N-type Ca2+ channels.</title>
        <authorList>
            <person name="Lee S."/>
            <person name="Kim Y."/>
            <person name="Back S.K."/>
            <person name="Choi H.W."/>
            <person name="Lee J.Y."/>
            <person name="Jung H.H."/>
            <person name="Ryu J.H."/>
            <person name="Suh H.W."/>
            <person name="Na H.S."/>
            <person name="Kim H.J."/>
            <person name="Rhim H."/>
            <person name="Kim J.I."/>
        </authorList>
    </citation>
    <scope>NUCLEOTIDE SEQUENCE [GENOMIC DNA]</scope>
    <scope>FUNCTION</scope>
    <scope>PROBABLE AMIDATION AT CYS-37</scope>
    <scope>BIOASSAY</scope>
    <scope>SYNTHESIS OF 13-37</scope>
</reference>
<feature type="propeptide" id="PRO_0000456411" evidence="6">
    <location>
        <begin position="1" status="less than"/>
        <end position="12"/>
    </location>
</feature>
<feature type="peptide" id="PRO_0000456412" description="Conotoxin FVIA" evidence="6">
    <location>
        <begin position="13"/>
        <end position="37"/>
    </location>
</feature>
<feature type="site" description="Important for calcium channel binding" evidence="1">
    <location>
        <position position="25"/>
    </location>
</feature>
<feature type="modified residue" description="Cysteine amide" evidence="2 6">
    <location>
        <position position="37"/>
    </location>
</feature>
<feature type="disulfide bond" evidence="2">
    <location>
        <begin position="13"/>
        <end position="28"/>
    </location>
</feature>
<feature type="disulfide bond" evidence="2">
    <location>
        <begin position="20"/>
        <end position="32"/>
    </location>
</feature>
<feature type="disulfide bond" evidence="2">
    <location>
        <begin position="27"/>
        <end position="37"/>
    </location>
</feature>
<feature type="non-terminal residue" evidence="6">
    <location>
        <position position="1"/>
    </location>
</feature>
<name>O16A_CONFU</name>
<organism>
    <name type="scientific">Conus fulmen</name>
    <name type="common">Thunderbolt cone</name>
    <name type="synonym">Chelyconus fulmen</name>
    <dbReference type="NCBI Taxonomy" id="2943440"/>
    <lineage>
        <taxon>Eukaryota</taxon>
        <taxon>Metazoa</taxon>
        <taxon>Spiralia</taxon>
        <taxon>Lophotrochozoa</taxon>
        <taxon>Mollusca</taxon>
        <taxon>Gastropoda</taxon>
        <taxon>Caenogastropoda</taxon>
        <taxon>Neogastropoda</taxon>
        <taxon>Conoidea</taxon>
        <taxon>Conidae</taxon>
        <taxon>Conus</taxon>
        <taxon>Pionoconus</taxon>
    </lineage>
</organism>
<proteinExistence type="evidence at protein level"/>
<keyword id="KW-0027">Amidation</keyword>
<keyword id="KW-0108">Calcium channel impairing toxin</keyword>
<keyword id="KW-1015">Disulfide bond</keyword>
<keyword id="KW-0872">Ion channel impairing toxin</keyword>
<keyword id="KW-0960">Knottin</keyword>
<keyword id="KW-0528">Neurotoxin</keyword>
<keyword id="KW-0638">Presynaptic neurotoxin</keyword>
<keyword id="KW-0964">Secreted</keyword>
<keyword id="KW-0800">Toxin</keyword>
<keyword id="KW-1218">Voltage-gated calcium channel impairing toxin</keyword>
<sequence length="38" mass="3987">ILSLSLLDRSTRCKGTGKSCSRIAYNCCTGSCRSGKCG</sequence>
<dbReference type="SMR" id="P0DW83"/>
<dbReference type="GO" id="GO:0005576">
    <property type="term" value="C:extracellular region"/>
    <property type="evidence" value="ECO:0007669"/>
    <property type="project" value="UniProtKB-SubCell"/>
</dbReference>
<dbReference type="GO" id="GO:0044231">
    <property type="term" value="C:host cell presynaptic membrane"/>
    <property type="evidence" value="ECO:0007669"/>
    <property type="project" value="UniProtKB-KW"/>
</dbReference>
<dbReference type="GO" id="GO:0005246">
    <property type="term" value="F:calcium channel regulator activity"/>
    <property type="evidence" value="ECO:0007669"/>
    <property type="project" value="UniProtKB-KW"/>
</dbReference>
<dbReference type="GO" id="GO:0008200">
    <property type="term" value="F:ion channel inhibitor activity"/>
    <property type="evidence" value="ECO:0007669"/>
    <property type="project" value="InterPro"/>
</dbReference>
<dbReference type="GO" id="GO:0090729">
    <property type="term" value="F:toxin activity"/>
    <property type="evidence" value="ECO:0007669"/>
    <property type="project" value="UniProtKB-KW"/>
</dbReference>
<dbReference type="InterPro" id="IPR012321">
    <property type="entry name" value="Conotoxin_omega-typ_CS"/>
</dbReference>
<dbReference type="SUPFAM" id="SSF57059">
    <property type="entry name" value="omega toxin-like"/>
    <property type="match status" value="1"/>
</dbReference>
<dbReference type="PROSITE" id="PS60004">
    <property type="entry name" value="OMEGA_CONOTOXIN"/>
    <property type="match status" value="1"/>
</dbReference>
<evidence type="ECO:0000250" key="1">
    <source>
        <dbReference type="UniProtKB" id="P05484"/>
    </source>
</evidence>
<evidence type="ECO:0000250" key="2">
    <source>
        <dbReference type="UniProtKB" id="Q9XZK2"/>
    </source>
</evidence>
<evidence type="ECO:0000269" key="3">
    <source>
    </source>
</evidence>
<evidence type="ECO:0000303" key="4">
    <source>
    </source>
</evidence>
<evidence type="ECO:0000305" key="5"/>
<evidence type="ECO:0000305" key="6">
    <source>
    </source>
</evidence>
<accession>P0DW83</accession>